<feature type="chain" id="PRO_1000214208" description="Riboflavin biosynthesis protein RibBA">
    <location>
        <begin position="1"/>
        <end position="397"/>
    </location>
</feature>
<feature type="region of interest" description="DHBP synthase">
    <location>
        <begin position="1"/>
        <end position="199"/>
    </location>
</feature>
<feature type="region of interest" description="GTP cyclohydrolase II">
    <location>
        <begin position="200"/>
        <end position="397"/>
    </location>
</feature>
<feature type="active site" description="Proton acceptor; for GTP cyclohydrolase activity" evidence="1">
    <location>
        <position position="327"/>
    </location>
</feature>
<feature type="active site" description="Nucleophile; for GTP cyclohydrolase activity" evidence="1">
    <location>
        <position position="329"/>
    </location>
</feature>
<feature type="binding site" evidence="1">
    <location>
        <begin position="26"/>
        <end position="27"/>
    </location>
    <ligand>
        <name>D-ribulose 5-phosphate</name>
        <dbReference type="ChEBI" id="CHEBI:58121"/>
    </ligand>
</feature>
<feature type="binding site" evidence="1">
    <location>
        <position position="27"/>
    </location>
    <ligand>
        <name>Mg(2+)</name>
        <dbReference type="ChEBI" id="CHEBI:18420"/>
        <label>1</label>
    </ligand>
</feature>
<feature type="binding site" evidence="1">
    <location>
        <position position="27"/>
    </location>
    <ligand>
        <name>Mg(2+)</name>
        <dbReference type="ChEBI" id="CHEBI:18420"/>
        <label>2</label>
    </ligand>
</feature>
<feature type="binding site" evidence="1">
    <location>
        <position position="31"/>
    </location>
    <ligand>
        <name>D-ribulose 5-phosphate</name>
        <dbReference type="ChEBI" id="CHEBI:58121"/>
    </ligand>
</feature>
<feature type="binding site" evidence="1">
    <location>
        <begin position="138"/>
        <end position="142"/>
    </location>
    <ligand>
        <name>D-ribulose 5-phosphate</name>
        <dbReference type="ChEBI" id="CHEBI:58121"/>
    </ligand>
</feature>
<feature type="binding site" evidence="1">
    <location>
        <position position="141"/>
    </location>
    <ligand>
        <name>Mg(2+)</name>
        <dbReference type="ChEBI" id="CHEBI:18420"/>
        <label>2</label>
    </ligand>
</feature>
<feature type="binding site" evidence="1">
    <location>
        <position position="162"/>
    </location>
    <ligand>
        <name>D-ribulose 5-phosphate</name>
        <dbReference type="ChEBI" id="CHEBI:58121"/>
    </ligand>
</feature>
<feature type="binding site" evidence="1">
    <location>
        <begin position="250"/>
        <end position="254"/>
    </location>
    <ligand>
        <name>GTP</name>
        <dbReference type="ChEBI" id="CHEBI:37565"/>
    </ligand>
</feature>
<feature type="binding site" evidence="1">
    <location>
        <position position="255"/>
    </location>
    <ligand>
        <name>Zn(2+)</name>
        <dbReference type="ChEBI" id="CHEBI:29105"/>
        <note>catalytic</note>
    </ligand>
</feature>
<feature type="binding site" evidence="1">
    <location>
        <position position="266"/>
    </location>
    <ligand>
        <name>Zn(2+)</name>
        <dbReference type="ChEBI" id="CHEBI:29105"/>
        <note>catalytic</note>
    </ligand>
</feature>
<feature type="binding site" evidence="1">
    <location>
        <position position="268"/>
    </location>
    <ligand>
        <name>Zn(2+)</name>
        <dbReference type="ChEBI" id="CHEBI:29105"/>
        <note>catalytic</note>
    </ligand>
</feature>
<feature type="binding site" evidence="1">
    <location>
        <position position="271"/>
    </location>
    <ligand>
        <name>GTP</name>
        <dbReference type="ChEBI" id="CHEBI:37565"/>
    </ligand>
</feature>
<feature type="binding site" evidence="1">
    <location>
        <begin position="293"/>
        <end position="295"/>
    </location>
    <ligand>
        <name>GTP</name>
        <dbReference type="ChEBI" id="CHEBI:37565"/>
    </ligand>
</feature>
<feature type="binding site" evidence="1">
    <location>
        <position position="315"/>
    </location>
    <ligand>
        <name>GTP</name>
        <dbReference type="ChEBI" id="CHEBI:37565"/>
    </ligand>
</feature>
<feature type="binding site" evidence="1">
    <location>
        <position position="350"/>
    </location>
    <ligand>
        <name>GTP</name>
        <dbReference type="ChEBI" id="CHEBI:37565"/>
    </ligand>
</feature>
<feature type="binding site" evidence="1">
    <location>
        <position position="355"/>
    </location>
    <ligand>
        <name>GTP</name>
        <dbReference type="ChEBI" id="CHEBI:37565"/>
    </ligand>
</feature>
<feature type="site" description="Essential for DHBP synthase activity" evidence="1">
    <location>
        <position position="124"/>
    </location>
</feature>
<feature type="site" description="Essential for DHBP synthase activity" evidence="1">
    <location>
        <position position="162"/>
    </location>
</feature>
<gene>
    <name evidence="1" type="primary">ribBA</name>
    <name type="ordered locus">GWCH70_2237</name>
</gene>
<keyword id="KW-0342">GTP-binding</keyword>
<keyword id="KW-0378">Hydrolase</keyword>
<keyword id="KW-0456">Lyase</keyword>
<keyword id="KW-0460">Magnesium</keyword>
<keyword id="KW-0464">Manganese</keyword>
<keyword id="KW-0479">Metal-binding</keyword>
<keyword id="KW-0511">Multifunctional enzyme</keyword>
<keyword id="KW-0547">Nucleotide-binding</keyword>
<keyword id="KW-0686">Riboflavin biosynthesis</keyword>
<keyword id="KW-0862">Zinc</keyword>
<organism>
    <name type="scientific">Geobacillus sp. (strain WCH70)</name>
    <dbReference type="NCBI Taxonomy" id="471223"/>
    <lineage>
        <taxon>Bacteria</taxon>
        <taxon>Bacillati</taxon>
        <taxon>Bacillota</taxon>
        <taxon>Bacilli</taxon>
        <taxon>Bacillales</taxon>
        <taxon>Anoxybacillaceae</taxon>
        <taxon>Geobacillus</taxon>
    </lineage>
</organism>
<name>RIBBA_GEOSW</name>
<sequence>MFDMIEEAIYELMQGKVIIVCDDEDRENEGDFVALAEKATPEVINFMIKYGRGLVCVPITEELADKLDLAPMVNHNTDSHGTAFTVSIDYKSTTTGISAYERSMTIQALLDPNAKASDFKRPGHVFPLVAKKGGVLRRAGHTEAAVDLARLCGAKPAGVICEIIKEDGTMARVSDLRKIADEFDLKMITIKDLIEYRRRKEKLVKREVEVMLPTEFGKFKAIGYTNIVDGKEHVALVKGEIIPDEPTLVRVHSECLTGDVFGSCRCDCGPQLHAALRQIEEEGRGVLLYMRQEGRGIGLINKLRAYKLQEQGYDTVEANERLGFPADLRDYGIGAQILKDLGVTKMRLLTNNPRKITGLKGHGLEVVERVPLQMPANKENEKYLRTKYEKLGHMLHF</sequence>
<dbReference type="EC" id="4.1.99.12" evidence="1"/>
<dbReference type="EC" id="3.5.4.25" evidence="1"/>
<dbReference type="EMBL" id="CP001638">
    <property type="protein sequence ID" value="ACS24945.1"/>
    <property type="molecule type" value="Genomic_DNA"/>
</dbReference>
<dbReference type="SMR" id="C5D3N0"/>
<dbReference type="STRING" id="471223.GWCH70_2237"/>
<dbReference type="KEGG" id="gwc:GWCH70_2237"/>
<dbReference type="eggNOG" id="COG0108">
    <property type="taxonomic scope" value="Bacteria"/>
</dbReference>
<dbReference type="eggNOG" id="COG0807">
    <property type="taxonomic scope" value="Bacteria"/>
</dbReference>
<dbReference type="HOGENOM" id="CLU_020273_1_2_9"/>
<dbReference type="OrthoDB" id="9793111at2"/>
<dbReference type="UniPathway" id="UPA00275">
    <property type="reaction ID" value="UER00399"/>
</dbReference>
<dbReference type="UniPathway" id="UPA00275">
    <property type="reaction ID" value="UER00400"/>
</dbReference>
<dbReference type="GO" id="GO:0005829">
    <property type="term" value="C:cytosol"/>
    <property type="evidence" value="ECO:0007669"/>
    <property type="project" value="TreeGrafter"/>
</dbReference>
<dbReference type="GO" id="GO:0008686">
    <property type="term" value="F:3,4-dihydroxy-2-butanone-4-phosphate synthase activity"/>
    <property type="evidence" value="ECO:0007669"/>
    <property type="project" value="UniProtKB-UniRule"/>
</dbReference>
<dbReference type="GO" id="GO:0005525">
    <property type="term" value="F:GTP binding"/>
    <property type="evidence" value="ECO:0007669"/>
    <property type="project" value="UniProtKB-KW"/>
</dbReference>
<dbReference type="GO" id="GO:0003935">
    <property type="term" value="F:GTP cyclohydrolase II activity"/>
    <property type="evidence" value="ECO:0007669"/>
    <property type="project" value="UniProtKB-UniRule"/>
</dbReference>
<dbReference type="GO" id="GO:0000287">
    <property type="term" value="F:magnesium ion binding"/>
    <property type="evidence" value="ECO:0007669"/>
    <property type="project" value="UniProtKB-UniRule"/>
</dbReference>
<dbReference type="GO" id="GO:0030145">
    <property type="term" value="F:manganese ion binding"/>
    <property type="evidence" value="ECO:0007669"/>
    <property type="project" value="UniProtKB-UniRule"/>
</dbReference>
<dbReference type="GO" id="GO:0008270">
    <property type="term" value="F:zinc ion binding"/>
    <property type="evidence" value="ECO:0007669"/>
    <property type="project" value="UniProtKB-UniRule"/>
</dbReference>
<dbReference type="GO" id="GO:0009231">
    <property type="term" value="P:riboflavin biosynthetic process"/>
    <property type="evidence" value="ECO:0007669"/>
    <property type="project" value="UniProtKB-UniRule"/>
</dbReference>
<dbReference type="CDD" id="cd00641">
    <property type="entry name" value="GTP_cyclohydro2"/>
    <property type="match status" value="1"/>
</dbReference>
<dbReference type="FunFam" id="3.40.50.10990:FF:000001">
    <property type="entry name" value="Riboflavin biosynthesis protein RibBA"/>
    <property type="match status" value="1"/>
</dbReference>
<dbReference type="FunFam" id="3.90.870.10:FF:000001">
    <property type="entry name" value="Riboflavin biosynthesis protein RibBA"/>
    <property type="match status" value="1"/>
</dbReference>
<dbReference type="Gene3D" id="3.90.870.10">
    <property type="entry name" value="DHBP synthase"/>
    <property type="match status" value="1"/>
</dbReference>
<dbReference type="Gene3D" id="3.40.50.10990">
    <property type="entry name" value="GTP cyclohydrolase II"/>
    <property type="match status" value="1"/>
</dbReference>
<dbReference type="HAMAP" id="MF_00179">
    <property type="entry name" value="RibA"/>
    <property type="match status" value="1"/>
</dbReference>
<dbReference type="HAMAP" id="MF_00180">
    <property type="entry name" value="RibB"/>
    <property type="match status" value="1"/>
</dbReference>
<dbReference type="HAMAP" id="MF_01283">
    <property type="entry name" value="RibBA"/>
    <property type="match status" value="1"/>
</dbReference>
<dbReference type="InterPro" id="IPR017945">
    <property type="entry name" value="DHBP_synth_RibB-like_a/b_dom"/>
</dbReference>
<dbReference type="InterPro" id="IPR000422">
    <property type="entry name" value="DHBP_synthase_RibB"/>
</dbReference>
<dbReference type="InterPro" id="IPR032677">
    <property type="entry name" value="GTP_cyclohydro_II"/>
</dbReference>
<dbReference type="InterPro" id="IPR000926">
    <property type="entry name" value="RibA"/>
</dbReference>
<dbReference type="InterPro" id="IPR036144">
    <property type="entry name" value="RibA-like_sf"/>
</dbReference>
<dbReference type="InterPro" id="IPR016299">
    <property type="entry name" value="Riboflavin_synth_RibBA"/>
</dbReference>
<dbReference type="NCBIfam" id="NF001591">
    <property type="entry name" value="PRK00393.1"/>
    <property type="match status" value="1"/>
</dbReference>
<dbReference type="NCBIfam" id="NF006803">
    <property type="entry name" value="PRK09311.1"/>
    <property type="match status" value="1"/>
</dbReference>
<dbReference type="NCBIfam" id="TIGR00505">
    <property type="entry name" value="ribA"/>
    <property type="match status" value="1"/>
</dbReference>
<dbReference type="NCBIfam" id="TIGR00506">
    <property type="entry name" value="ribB"/>
    <property type="match status" value="1"/>
</dbReference>
<dbReference type="PANTHER" id="PTHR21327:SF18">
    <property type="entry name" value="3,4-DIHYDROXY-2-BUTANONE 4-PHOSPHATE SYNTHASE"/>
    <property type="match status" value="1"/>
</dbReference>
<dbReference type="PANTHER" id="PTHR21327">
    <property type="entry name" value="GTP CYCLOHYDROLASE II-RELATED"/>
    <property type="match status" value="1"/>
</dbReference>
<dbReference type="Pfam" id="PF00926">
    <property type="entry name" value="DHBP_synthase"/>
    <property type="match status" value="1"/>
</dbReference>
<dbReference type="Pfam" id="PF00925">
    <property type="entry name" value="GTP_cyclohydro2"/>
    <property type="match status" value="1"/>
</dbReference>
<dbReference type="PIRSF" id="PIRSF001259">
    <property type="entry name" value="RibA"/>
    <property type="match status" value="1"/>
</dbReference>
<dbReference type="SUPFAM" id="SSF142695">
    <property type="entry name" value="RibA-like"/>
    <property type="match status" value="1"/>
</dbReference>
<dbReference type="SUPFAM" id="SSF55821">
    <property type="entry name" value="YrdC/RibB"/>
    <property type="match status" value="1"/>
</dbReference>
<comment type="function">
    <text evidence="1">Catalyzes the conversion of D-ribulose 5-phosphate to formate and 3,4-dihydroxy-2-butanone 4-phosphate.</text>
</comment>
<comment type="function">
    <text evidence="1">Catalyzes the conversion of GTP to 2,5-diamino-6-ribosylamino-4(3H)-pyrimidinone 5'-phosphate (DARP), formate and pyrophosphate.</text>
</comment>
<comment type="catalytic activity">
    <reaction evidence="1">
        <text>D-ribulose 5-phosphate = (2S)-2-hydroxy-3-oxobutyl phosphate + formate + H(+)</text>
        <dbReference type="Rhea" id="RHEA:18457"/>
        <dbReference type="ChEBI" id="CHEBI:15378"/>
        <dbReference type="ChEBI" id="CHEBI:15740"/>
        <dbReference type="ChEBI" id="CHEBI:58121"/>
        <dbReference type="ChEBI" id="CHEBI:58830"/>
        <dbReference type="EC" id="4.1.99.12"/>
    </reaction>
</comment>
<comment type="catalytic activity">
    <reaction evidence="1">
        <text>GTP + 4 H2O = 2,5-diamino-6-hydroxy-4-(5-phosphoribosylamino)-pyrimidine + formate + 2 phosphate + 3 H(+)</text>
        <dbReference type="Rhea" id="RHEA:23704"/>
        <dbReference type="ChEBI" id="CHEBI:15377"/>
        <dbReference type="ChEBI" id="CHEBI:15378"/>
        <dbReference type="ChEBI" id="CHEBI:15740"/>
        <dbReference type="ChEBI" id="CHEBI:37565"/>
        <dbReference type="ChEBI" id="CHEBI:43474"/>
        <dbReference type="ChEBI" id="CHEBI:58614"/>
        <dbReference type="EC" id="3.5.4.25"/>
    </reaction>
</comment>
<comment type="cofactor">
    <cofactor evidence="1">
        <name>Mg(2+)</name>
        <dbReference type="ChEBI" id="CHEBI:18420"/>
    </cofactor>
    <cofactor evidence="1">
        <name>Mn(2+)</name>
        <dbReference type="ChEBI" id="CHEBI:29035"/>
    </cofactor>
    <text evidence="1">Binds 2 divalent metal cations per subunit. Magnesium or manganese.</text>
</comment>
<comment type="cofactor">
    <cofactor evidence="1">
        <name>Zn(2+)</name>
        <dbReference type="ChEBI" id="CHEBI:29105"/>
    </cofactor>
    <text evidence="1">Binds 1 zinc ion per subunit.</text>
</comment>
<comment type="pathway">
    <text evidence="1">Cofactor biosynthesis; riboflavin biosynthesis; 2-hydroxy-3-oxobutyl phosphate from D-ribulose 5-phosphate: step 1/1.</text>
</comment>
<comment type="pathway">
    <text evidence="1">Cofactor biosynthesis; riboflavin biosynthesis; 5-amino-6-(D-ribitylamino)uracil from GTP: step 1/4.</text>
</comment>
<comment type="similarity">
    <text evidence="1">In the N-terminal section; belongs to the DHBP synthase family.</text>
</comment>
<comment type="similarity">
    <text evidence="1">In the C-terminal section; belongs to the GTP cyclohydrolase II family.</text>
</comment>
<reference key="1">
    <citation type="submission" date="2009-06" db="EMBL/GenBank/DDBJ databases">
        <title>Complete sequence of chromosome of Geopacillus sp. WCH70.</title>
        <authorList>
            <consortium name="US DOE Joint Genome Institute"/>
            <person name="Lucas S."/>
            <person name="Copeland A."/>
            <person name="Lapidus A."/>
            <person name="Glavina del Rio T."/>
            <person name="Dalin E."/>
            <person name="Tice H."/>
            <person name="Bruce D."/>
            <person name="Goodwin L."/>
            <person name="Pitluck S."/>
            <person name="Chertkov O."/>
            <person name="Brettin T."/>
            <person name="Detter J.C."/>
            <person name="Han C."/>
            <person name="Larimer F."/>
            <person name="Land M."/>
            <person name="Hauser L."/>
            <person name="Kyrpides N."/>
            <person name="Mikhailova N."/>
            <person name="Brumm P."/>
            <person name="Mead D.A."/>
            <person name="Richardson P."/>
        </authorList>
    </citation>
    <scope>NUCLEOTIDE SEQUENCE [LARGE SCALE GENOMIC DNA]</scope>
    <source>
        <strain>WCH70</strain>
    </source>
</reference>
<protein>
    <recommendedName>
        <fullName evidence="1">Riboflavin biosynthesis protein RibBA</fullName>
    </recommendedName>
    <domain>
        <recommendedName>
            <fullName evidence="1">3,4-dihydroxy-2-butanone 4-phosphate synthase</fullName>
            <shortName evidence="1">DHBP synthase</shortName>
            <ecNumber evidence="1">4.1.99.12</ecNumber>
        </recommendedName>
    </domain>
    <domain>
        <recommendedName>
            <fullName evidence="1">GTP cyclohydrolase-2</fullName>
            <ecNumber evidence="1">3.5.4.25</ecNumber>
        </recommendedName>
        <alternativeName>
            <fullName evidence="1">GTP cyclohydrolase II</fullName>
        </alternativeName>
    </domain>
</protein>
<evidence type="ECO:0000255" key="1">
    <source>
        <dbReference type="HAMAP-Rule" id="MF_01283"/>
    </source>
</evidence>
<accession>C5D3N0</accession>
<proteinExistence type="inferred from homology"/>